<organism>
    <name type="scientific">Drosophila melanogaster</name>
    <name type="common">Fruit fly</name>
    <dbReference type="NCBI Taxonomy" id="7227"/>
    <lineage>
        <taxon>Eukaryota</taxon>
        <taxon>Metazoa</taxon>
        <taxon>Ecdysozoa</taxon>
        <taxon>Arthropoda</taxon>
        <taxon>Hexapoda</taxon>
        <taxon>Insecta</taxon>
        <taxon>Pterygota</taxon>
        <taxon>Neoptera</taxon>
        <taxon>Endopterygota</taxon>
        <taxon>Diptera</taxon>
        <taxon>Brachycera</taxon>
        <taxon>Muscomorpha</taxon>
        <taxon>Ephydroidea</taxon>
        <taxon>Drosophilidae</taxon>
        <taxon>Drosophila</taxon>
        <taxon>Sophophora</taxon>
    </lineage>
</organism>
<comment type="function">
    <text evidence="2 4 5">Phosphatidylinositol-4-phosphate-binding protein that links Golgi membranes to the cytoskeleton and may participate in the tensile force required for vesicle budding from the Golgi (PubMed:19837035, PubMed:24786584). Thereby, may play a role in Golgi membrane trafficking and could indirectly give its flattened shape to the Golgi apparatus (By similarity). May also bind to the coatomer to regulate Golgi membrane trafficking (PubMed:23720043, PubMed:24786584). May play a role in anterograde transport from the Golgi to the plasma membrane and regulate secretion (By similarity). Also involved in the control of the localization of Golgi enzymes through interaction with their cytoplasmic part (By similarity). Functions in cytokinesis by regulating contractile ring formation and vesicle trafficking during cleavage furrow ingression (PubMed:24786584). May also have a role in the intital steps of central spindle formation (PubMed:24786584). Can also bind phosphatidylinositol-3-phosphate and phosphatidylinositol-5-phosphate in vitro (PubMed:24786584).</text>
</comment>
<comment type="subunit">
    <text evidence="1 4 5">Homooligomer (By similarity). Interacts with botv, Ext2 and ttv (PubMed:23720043). Interacts with Vti1 (PubMed:23720043). Interacts with Vps35, Rab5, Chc, Rab11, zip, Pav and Septin1 (PubMed:24786584).</text>
</comment>
<comment type="interaction">
    <interactant intactId="EBI-84891">
        <id>Q9VQ93</id>
    </interactant>
    <interactant intactId="EBI-198100">
        <id>P29310</id>
        <label>14-3-3zeta</label>
    </interactant>
    <organismsDiffer>false</organismsDiffer>
    <experiments>3</experiments>
</comment>
<comment type="interaction">
    <interactant intactId="EBI-84891">
        <id>Q9VQ93</id>
    </interactant>
    <interactant intactId="EBI-115381">
        <id>Q9W328</id>
        <label>Lst8</label>
    </interactant>
    <organismsDiffer>false</organismsDiffer>
    <experiments>2</experiments>
</comment>
<comment type="interaction">
    <interactant intactId="EBI-84891">
        <id>Q9VQ93</id>
    </interactant>
    <interactant intactId="EBI-4372932">
        <id>Q9VND8</id>
        <label>Rheb</label>
    </interactant>
    <organismsDiffer>false</organismsDiffer>
    <experiments>2</experiments>
</comment>
<comment type="interaction">
    <interactant intactId="EBI-84891">
        <id>Q9VQ93</id>
    </interactant>
    <interactant intactId="EBI-100452">
        <id>Q9VGS2</id>
        <label>Tctp</label>
    </interactant>
    <organismsDiffer>false</organismsDiffer>
    <experiments>4</experiments>
</comment>
<comment type="subcellular location">
    <subcellularLocation>
        <location evidence="5 7">Golgi apparatus membrane</location>
        <topology evidence="7">Peripheral membrane protein</topology>
        <orientation evidence="7">Cytoplasmic side</orientation>
    </subcellularLocation>
    <subcellularLocation>
        <location evidence="5">Cytoplasmic vesicle</location>
    </subcellularLocation>
    <subcellularLocation>
        <location evidence="5">Cleavage furrow</location>
    </subcellularLocation>
    <text evidence="5 6">Phosphatidylinositol 4-phosphate-binding and oligomerization participate in the recruitment onto Golgi membranes (PubMed:23720043). In dividing cells associates with vesicles in polar regions of the cells during metaphase and anaphase, and localizes to the cleavage furrow during telophase (PubMed:24786584).</text>
</comment>
<comment type="disruption phenotype">
    <text evidence="4 5">Lethal (PubMed:23720043, PubMed:24786584). Embryos display an aberrant pattern of denticles with some additional dorsalization and twisting (PubMed:23720043). It is associated with a defect in heparan sulfate proteoglycan synthesis which in turn alters hedgehog signaling (PubMed:23720043).</text>
</comment>
<comment type="similarity">
    <text evidence="6">Belongs to the GOLPH3/VPS74 family.</text>
</comment>
<dbReference type="EMBL" id="AE014134">
    <property type="protein sequence ID" value="AAF51284.1"/>
    <property type="molecule type" value="Genomic_DNA"/>
</dbReference>
<dbReference type="EMBL" id="AE014134">
    <property type="protein sequence ID" value="AAN10452.2"/>
    <property type="molecule type" value="Genomic_DNA"/>
</dbReference>
<dbReference type="EMBL" id="AE014134">
    <property type="protein sequence ID" value="AAX53593.1"/>
    <property type="molecule type" value="Genomic_DNA"/>
</dbReference>
<dbReference type="EMBL" id="AY058532">
    <property type="protein sequence ID" value="AAL13761.1"/>
    <property type="molecule type" value="mRNA"/>
</dbReference>
<dbReference type="RefSeq" id="NP_001014460.1">
    <property type="nucleotide sequence ID" value="NM_001014460.3"/>
</dbReference>
<dbReference type="RefSeq" id="NP_001027220.1">
    <property type="nucleotide sequence ID" value="NM_001032049.2"/>
</dbReference>
<dbReference type="RefSeq" id="NP_608658.1">
    <property type="nucleotide sequence ID" value="NM_134814.5"/>
</dbReference>
<dbReference type="SMR" id="Q9VQ93"/>
<dbReference type="BioGRID" id="59630">
    <property type="interactions" value="745"/>
</dbReference>
<dbReference type="FunCoup" id="Q9VQ93">
    <property type="interactions" value="780"/>
</dbReference>
<dbReference type="IntAct" id="Q9VQ93">
    <property type="interactions" value="7"/>
</dbReference>
<dbReference type="STRING" id="7227.FBpp0100140"/>
<dbReference type="PaxDb" id="7227-FBpp0100140"/>
<dbReference type="DNASU" id="33402"/>
<dbReference type="EnsemblMetazoa" id="FBtr0077840">
    <property type="protein sequence ID" value="FBpp0100138"/>
    <property type="gene ID" value="FBgn0267378"/>
</dbReference>
<dbReference type="EnsemblMetazoa" id="FBtr0100673">
    <property type="protein sequence ID" value="FBpp0100140"/>
    <property type="gene ID" value="FBgn0267378"/>
</dbReference>
<dbReference type="EnsemblMetazoa" id="FBtr0100674">
    <property type="protein sequence ID" value="FBpp0100141"/>
    <property type="gene ID" value="FBgn0267378"/>
</dbReference>
<dbReference type="GeneID" id="33402"/>
<dbReference type="KEGG" id="dme:Dmel_CG7085"/>
<dbReference type="UCSC" id="CG7085-RA">
    <property type="organism name" value="d. melanogaster"/>
</dbReference>
<dbReference type="AGR" id="FB:FBgn0267378"/>
<dbReference type="CTD" id="33402"/>
<dbReference type="FlyBase" id="FBgn0267378">
    <property type="gene designation" value="sau"/>
</dbReference>
<dbReference type="VEuPathDB" id="VectorBase:FBgn0267378"/>
<dbReference type="eggNOG" id="KOG3983">
    <property type="taxonomic scope" value="Eukaryota"/>
</dbReference>
<dbReference type="GeneTree" id="ENSGT00390000007153"/>
<dbReference type="HOGENOM" id="CLU_036311_0_0_1"/>
<dbReference type="InParanoid" id="Q9VQ93"/>
<dbReference type="OMA" id="GETWNLL"/>
<dbReference type="OrthoDB" id="2189106at2759"/>
<dbReference type="PhylomeDB" id="Q9VQ93"/>
<dbReference type="SignaLink" id="Q9VQ93"/>
<dbReference type="BioGRID-ORCS" id="33402">
    <property type="hits" value="3 hits in 3 CRISPR screens"/>
</dbReference>
<dbReference type="ChiTaRS" id="sau">
    <property type="organism name" value="fly"/>
</dbReference>
<dbReference type="GenomeRNAi" id="33402"/>
<dbReference type="PRO" id="PR:Q9VQ93"/>
<dbReference type="Proteomes" id="UP000000803">
    <property type="component" value="Chromosome 2L"/>
</dbReference>
<dbReference type="Bgee" id="FBgn0267378">
    <property type="expression patterns" value="Expressed in thoracico-abdominal ganglion (Drosophila) and 248 other cell types or tissues"/>
</dbReference>
<dbReference type="ExpressionAtlas" id="Q9VQ93">
    <property type="expression patterns" value="baseline and differential"/>
</dbReference>
<dbReference type="GO" id="GO:0032154">
    <property type="term" value="C:cleavage furrow"/>
    <property type="evidence" value="ECO:0000314"/>
    <property type="project" value="FlyBase"/>
</dbReference>
<dbReference type="GO" id="GO:0031410">
    <property type="term" value="C:cytoplasmic vesicle"/>
    <property type="evidence" value="ECO:0007669"/>
    <property type="project" value="UniProtKB-KW"/>
</dbReference>
<dbReference type="GO" id="GO:0005829">
    <property type="term" value="C:cytosol"/>
    <property type="evidence" value="ECO:0000318"/>
    <property type="project" value="GO_Central"/>
</dbReference>
<dbReference type="GO" id="GO:0005794">
    <property type="term" value="C:Golgi apparatus"/>
    <property type="evidence" value="ECO:0000314"/>
    <property type="project" value="FlyBase"/>
</dbReference>
<dbReference type="GO" id="GO:0031985">
    <property type="term" value="C:Golgi cisterna"/>
    <property type="evidence" value="ECO:0000250"/>
    <property type="project" value="UniProtKB"/>
</dbReference>
<dbReference type="GO" id="GO:0000139">
    <property type="term" value="C:Golgi membrane"/>
    <property type="evidence" value="ECO:0000314"/>
    <property type="project" value="FlyBase"/>
</dbReference>
<dbReference type="GO" id="GO:0005802">
    <property type="term" value="C:trans-Golgi network"/>
    <property type="evidence" value="ECO:0000318"/>
    <property type="project" value="GO_Central"/>
</dbReference>
<dbReference type="GO" id="GO:0140312">
    <property type="term" value="F:cargo adaptor activity"/>
    <property type="evidence" value="ECO:0000314"/>
    <property type="project" value="FlyBase"/>
</dbReference>
<dbReference type="GO" id="GO:0070300">
    <property type="term" value="F:phosphatidic acid binding"/>
    <property type="evidence" value="ECO:0000314"/>
    <property type="project" value="FlyBase"/>
</dbReference>
<dbReference type="GO" id="GO:0032266">
    <property type="term" value="F:phosphatidylinositol-3-phosphate binding"/>
    <property type="evidence" value="ECO:0000314"/>
    <property type="project" value="FlyBase"/>
</dbReference>
<dbReference type="GO" id="GO:0070273">
    <property type="term" value="F:phosphatidylinositol-4-phosphate binding"/>
    <property type="evidence" value="ECO:0000314"/>
    <property type="project" value="UniProtKB"/>
</dbReference>
<dbReference type="GO" id="GO:0010314">
    <property type="term" value="F:phosphatidylinositol-5-phosphate binding"/>
    <property type="evidence" value="ECO:0000314"/>
    <property type="project" value="FlyBase"/>
</dbReference>
<dbReference type="GO" id="GO:0031267">
    <property type="term" value="F:small GTPase binding"/>
    <property type="evidence" value="ECO:0000353"/>
    <property type="project" value="FlyBase"/>
</dbReference>
<dbReference type="GO" id="GO:0000915">
    <property type="term" value="P:actomyosin contractile ring assembly"/>
    <property type="evidence" value="ECO:0000315"/>
    <property type="project" value="FlyBase"/>
</dbReference>
<dbReference type="GO" id="GO:0036089">
    <property type="term" value="P:cleavage furrow formation"/>
    <property type="evidence" value="ECO:0000315"/>
    <property type="project" value="FlyBase"/>
</dbReference>
<dbReference type="GO" id="GO:0007030">
    <property type="term" value="P:Golgi organization"/>
    <property type="evidence" value="ECO:0000315"/>
    <property type="project" value="FlyBase"/>
</dbReference>
<dbReference type="GO" id="GO:0043001">
    <property type="term" value="P:Golgi to plasma membrane protein transport"/>
    <property type="evidence" value="ECO:0000318"/>
    <property type="project" value="GO_Central"/>
</dbReference>
<dbReference type="GO" id="GO:0048194">
    <property type="term" value="P:Golgi vesicle budding"/>
    <property type="evidence" value="ECO:0000318"/>
    <property type="project" value="GO_Central"/>
</dbReference>
<dbReference type="GO" id="GO:0007112">
    <property type="term" value="P:male meiosis cytokinesis"/>
    <property type="evidence" value="ECO:0000315"/>
    <property type="project" value="FlyBase"/>
</dbReference>
<dbReference type="GO" id="GO:0007110">
    <property type="term" value="P:meiosis I cytokinesis"/>
    <property type="evidence" value="ECO:0000315"/>
    <property type="project" value="FlyBase"/>
</dbReference>
<dbReference type="GO" id="GO:0007111">
    <property type="term" value="P:meiosis II cytokinesis"/>
    <property type="evidence" value="ECO:0000315"/>
    <property type="project" value="FlyBase"/>
</dbReference>
<dbReference type="GO" id="GO:0000281">
    <property type="term" value="P:mitotic cytokinesis"/>
    <property type="evidence" value="ECO:0000315"/>
    <property type="project" value="FlyBase"/>
</dbReference>
<dbReference type="GO" id="GO:0090307">
    <property type="term" value="P:mitotic spindle assembly"/>
    <property type="evidence" value="ECO:0000315"/>
    <property type="project" value="FlyBase"/>
</dbReference>
<dbReference type="GO" id="GO:0140450">
    <property type="term" value="P:protein targeting to Golgi apparatus"/>
    <property type="evidence" value="ECO:0000250"/>
    <property type="project" value="FlyBase"/>
</dbReference>
<dbReference type="GO" id="GO:0000301">
    <property type="term" value="P:retrograde transport, vesicle recycling within Golgi"/>
    <property type="evidence" value="ECO:0000315"/>
    <property type="project" value="FlyBase"/>
</dbReference>
<dbReference type="GO" id="GO:0006890">
    <property type="term" value="P:retrograde vesicle-mediated transport, Golgi to endoplasmic reticulum"/>
    <property type="evidence" value="ECO:0000318"/>
    <property type="project" value="GO_Central"/>
</dbReference>
<dbReference type="GO" id="GO:0051225">
    <property type="term" value="P:spindle assembly"/>
    <property type="evidence" value="ECO:0000315"/>
    <property type="project" value="FlyBase"/>
</dbReference>
<dbReference type="GO" id="GO:0007053">
    <property type="term" value="P:spindle assembly involved in male meiosis"/>
    <property type="evidence" value="ECO:0000315"/>
    <property type="project" value="FlyBase"/>
</dbReference>
<dbReference type="GO" id="GO:0046718">
    <property type="term" value="P:symbiont entry into host cell"/>
    <property type="evidence" value="ECO:0007001"/>
    <property type="project" value="FlyBase"/>
</dbReference>
<dbReference type="FunFam" id="1.10.3630.10:FF:000001">
    <property type="entry name" value="Golgi phosphoprotein 3"/>
    <property type="match status" value="1"/>
</dbReference>
<dbReference type="Gene3D" id="1.10.3630.10">
    <property type="entry name" value="yeast vps74-n-term truncation variant domain like"/>
    <property type="match status" value="1"/>
</dbReference>
<dbReference type="InterPro" id="IPR008628">
    <property type="entry name" value="GPP34-like"/>
</dbReference>
<dbReference type="InterPro" id="IPR038261">
    <property type="entry name" value="GPP34-like_sf"/>
</dbReference>
<dbReference type="PANTHER" id="PTHR12704:SF2">
    <property type="entry name" value="GOLGI PHOSPHOPROTEIN 3 HOMOLOG SAURON"/>
    <property type="match status" value="1"/>
</dbReference>
<dbReference type="PANTHER" id="PTHR12704">
    <property type="entry name" value="TRANS-GOLGI PROTEIN GMX33"/>
    <property type="match status" value="1"/>
</dbReference>
<dbReference type="Pfam" id="PF05719">
    <property type="entry name" value="GPP34"/>
    <property type="match status" value="1"/>
</dbReference>
<evidence type="ECO:0000250" key="1"/>
<evidence type="ECO:0000250" key="2">
    <source>
        <dbReference type="UniProtKB" id="Q9H4A6"/>
    </source>
</evidence>
<evidence type="ECO:0000256" key="3">
    <source>
        <dbReference type="SAM" id="MobiDB-lite"/>
    </source>
</evidence>
<evidence type="ECO:0000269" key="4">
    <source>
    </source>
</evidence>
<evidence type="ECO:0000269" key="5">
    <source>
    </source>
</evidence>
<evidence type="ECO:0000305" key="6"/>
<evidence type="ECO:0000305" key="7">
    <source>
    </source>
</evidence>
<evidence type="ECO:0000312" key="8">
    <source>
        <dbReference type="FlyBase" id="FBgn0267378"/>
    </source>
</evidence>
<gene>
    <name evidence="8" type="primary">sau</name>
    <name evidence="8" type="synonym">GOLPH3</name>
    <name evidence="8" type="synonym">l(2)s5379</name>
    <name evidence="8" type="synonym">rti</name>
    <name evidence="8" type="ORF">CG7085</name>
</gene>
<accession>Q9VQ93</accession>
<protein>
    <recommendedName>
        <fullName evidence="6">Golgi phosphoprotein 3 homolog sauron</fullName>
    </recommendedName>
    <alternativeName>
        <fullName evidence="8">Protein rotini</fullName>
    </alternativeName>
</protein>
<reference key="1">
    <citation type="journal article" date="2000" name="Science">
        <title>The genome sequence of Drosophila melanogaster.</title>
        <authorList>
            <person name="Adams M.D."/>
            <person name="Celniker S.E."/>
            <person name="Holt R.A."/>
            <person name="Evans C.A."/>
            <person name="Gocayne J.D."/>
            <person name="Amanatides P.G."/>
            <person name="Scherer S.E."/>
            <person name="Li P.W."/>
            <person name="Hoskins R.A."/>
            <person name="Galle R.F."/>
            <person name="George R.A."/>
            <person name="Lewis S.E."/>
            <person name="Richards S."/>
            <person name="Ashburner M."/>
            <person name="Henderson S.N."/>
            <person name="Sutton G.G."/>
            <person name="Wortman J.R."/>
            <person name="Yandell M.D."/>
            <person name="Zhang Q."/>
            <person name="Chen L.X."/>
            <person name="Brandon R.C."/>
            <person name="Rogers Y.-H.C."/>
            <person name="Blazej R.G."/>
            <person name="Champe M."/>
            <person name="Pfeiffer B.D."/>
            <person name="Wan K.H."/>
            <person name="Doyle C."/>
            <person name="Baxter E.G."/>
            <person name="Helt G."/>
            <person name="Nelson C.R."/>
            <person name="Miklos G.L.G."/>
            <person name="Abril J.F."/>
            <person name="Agbayani A."/>
            <person name="An H.-J."/>
            <person name="Andrews-Pfannkoch C."/>
            <person name="Baldwin D."/>
            <person name="Ballew R.M."/>
            <person name="Basu A."/>
            <person name="Baxendale J."/>
            <person name="Bayraktaroglu L."/>
            <person name="Beasley E.M."/>
            <person name="Beeson K.Y."/>
            <person name="Benos P.V."/>
            <person name="Berman B.P."/>
            <person name="Bhandari D."/>
            <person name="Bolshakov S."/>
            <person name="Borkova D."/>
            <person name="Botchan M.R."/>
            <person name="Bouck J."/>
            <person name="Brokstein P."/>
            <person name="Brottier P."/>
            <person name="Burtis K.C."/>
            <person name="Busam D.A."/>
            <person name="Butler H."/>
            <person name="Cadieu E."/>
            <person name="Center A."/>
            <person name="Chandra I."/>
            <person name="Cherry J.M."/>
            <person name="Cawley S."/>
            <person name="Dahlke C."/>
            <person name="Davenport L.B."/>
            <person name="Davies P."/>
            <person name="de Pablos B."/>
            <person name="Delcher A."/>
            <person name="Deng Z."/>
            <person name="Mays A.D."/>
            <person name="Dew I."/>
            <person name="Dietz S.M."/>
            <person name="Dodson K."/>
            <person name="Doup L.E."/>
            <person name="Downes M."/>
            <person name="Dugan-Rocha S."/>
            <person name="Dunkov B.C."/>
            <person name="Dunn P."/>
            <person name="Durbin K.J."/>
            <person name="Evangelista C.C."/>
            <person name="Ferraz C."/>
            <person name="Ferriera S."/>
            <person name="Fleischmann W."/>
            <person name="Fosler C."/>
            <person name="Gabrielian A.E."/>
            <person name="Garg N.S."/>
            <person name="Gelbart W.M."/>
            <person name="Glasser K."/>
            <person name="Glodek A."/>
            <person name="Gong F."/>
            <person name="Gorrell J.H."/>
            <person name="Gu Z."/>
            <person name="Guan P."/>
            <person name="Harris M."/>
            <person name="Harris N.L."/>
            <person name="Harvey D.A."/>
            <person name="Heiman T.J."/>
            <person name="Hernandez J.R."/>
            <person name="Houck J."/>
            <person name="Hostin D."/>
            <person name="Houston K.A."/>
            <person name="Howland T.J."/>
            <person name="Wei M.-H."/>
            <person name="Ibegwam C."/>
            <person name="Jalali M."/>
            <person name="Kalush F."/>
            <person name="Karpen G.H."/>
            <person name="Ke Z."/>
            <person name="Kennison J.A."/>
            <person name="Ketchum K.A."/>
            <person name="Kimmel B.E."/>
            <person name="Kodira C.D."/>
            <person name="Kraft C.L."/>
            <person name="Kravitz S."/>
            <person name="Kulp D."/>
            <person name="Lai Z."/>
            <person name="Lasko P."/>
            <person name="Lei Y."/>
            <person name="Levitsky A.A."/>
            <person name="Li J.H."/>
            <person name="Li Z."/>
            <person name="Liang Y."/>
            <person name="Lin X."/>
            <person name="Liu X."/>
            <person name="Mattei B."/>
            <person name="McIntosh T.C."/>
            <person name="McLeod M.P."/>
            <person name="McPherson D."/>
            <person name="Merkulov G."/>
            <person name="Milshina N.V."/>
            <person name="Mobarry C."/>
            <person name="Morris J."/>
            <person name="Moshrefi A."/>
            <person name="Mount S.M."/>
            <person name="Moy M."/>
            <person name="Murphy B."/>
            <person name="Murphy L."/>
            <person name="Muzny D.M."/>
            <person name="Nelson D.L."/>
            <person name="Nelson D.R."/>
            <person name="Nelson K.A."/>
            <person name="Nixon K."/>
            <person name="Nusskern D.R."/>
            <person name="Pacleb J.M."/>
            <person name="Palazzolo M."/>
            <person name="Pittman G.S."/>
            <person name="Pan S."/>
            <person name="Pollard J."/>
            <person name="Puri V."/>
            <person name="Reese M.G."/>
            <person name="Reinert K."/>
            <person name="Remington K."/>
            <person name="Saunders R.D.C."/>
            <person name="Scheeler F."/>
            <person name="Shen H."/>
            <person name="Shue B.C."/>
            <person name="Siden-Kiamos I."/>
            <person name="Simpson M."/>
            <person name="Skupski M.P."/>
            <person name="Smith T.J."/>
            <person name="Spier E."/>
            <person name="Spradling A.C."/>
            <person name="Stapleton M."/>
            <person name="Strong R."/>
            <person name="Sun E."/>
            <person name="Svirskas R."/>
            <person name="Tector C."/>
            <person name="Turner R."/>
            <person name="Venter E."/>
            <person name="Wang A.H."/>
            <person name="Wang X."/>
            <person name="Wang Z.-Y."/>
            <person name="Wassarman D.A."/>
            <person name="Weinstock G.M."/>
            <person name="Weissenbach J."/>
            <person name="Williams S.M."/>
            <person name="Woodage T."/>
            <person name="Worley K.C."/>
            <person name="Wu D."/>
            <person name="Yang S."/>
            <person name="Yao Q.A."/>
            <person name="Ye J."/>
            <person name="Yeh R.-F."/>
            <person name="Zaveri J.S."/>
            <person name="Zhan M."/>
            <person name="Zhang G."/>
            <person name="Zhao Q."/>
            <person name="Zheng L."/>
            <person name="Zheng X.H."/>
            <person name="Zhong F.N."/>
            <person name="Zhong W."/>
            <person name="Zhou X."/>
            <person name="Zhu S.C."/>
            <person name="Zhu X."/>
            <person name="Smith H.O."/>
            <person name="Gibbs R.A."/>
            <person name="Myers E.W."/>
            <person name="Rubin G.M."/>
            <person name="Venter J.C."/>
        </authorList>
    </citation>
    <scope>NUCLEOTIDE SEQUENCE [LARGE SCALE GENOMIC DNA]</scope>
    <source>
        <strain>Berkeley</strain>
    </source>
</reference>
<reference key="2">
    <citation type="journal article" date="2002" name="Genome Biol.">
        <title>Annotation of the Drosophila melanogaster euchromatic genome: a systematic review.</title>
        <authorList>
            <person name="Misra S."/>
            <person name="Crosby M.A."/>
            <person name="Mungall C.J."/>
            <person name="Matthews B.B."/>
            <person name="Campbell K.S."/>
            <person name="Hradecky P."/>
            <person name="Huang Y."/>
            <person name="Kaminker J.S."/>
            <person name="Millburn G.H."/>
            <person name="Prochnik S.E."/>
            <person name="Smith C.D."/>
            <person name="Tupy J.L."/>
            <person name="Whitfield E.J."/>
            <person name="Bayraktaroglu L."/>
            <person name="Berman B.P."/>
            <person name="Bettencourt B.R."/>
            <person name="Celniker S.E."/>
            <person name="de Grey A.D.N.J."/>
            <person name="Drysdale R.A."/>
            <person name="Harris N.L."/>
            <person name="Richter J."/>
            <person name="Russo S."/>
            <person name="Schroeder A.J."/>
            <person name="Shu S.Q."/>
            <person name="Stapleton M."/>
            <person name="Yamada C."/>
            <person name="Ashburner M."/>
            <person name="Gelbart W.M."/>
            <person name="Rubin G.M."/>
            <person name="Lewis S.E."/>
        </authorList>
    </citation>
    <scope>GENOME REANNOTATION</scope>
    <source>
        <strain>Berkeley</strain>
    </source>
</reference>
<reference key="3">
    <citation type="journal article" date="2002" name="Genome Biol.">
        <title>A Drosophila full-length cDNA resource.</title>
        <authorList>
            <person name="Stapleton M."/>
            <person name="Carlson J.W."/>
            <person name="Brokstein P."/>
            <person name="Yu C."/>
            <person name="Champe M."/>
            <person name="George R.A."/>
            <person name="Guarin H."/>
            <person name="Kronmiller B."/>
            <person name="Pacleb J.M."/>
            <person name="Park S."/>
            <person name="Wan K.H."/>
            <person name="Rubin G.M."/>
            <person name="Celniker S.E."/>
        </authorList>
    </citation>
    <scope>NUCLEOTIDE SEQUENCE [LARGE SCALE MRNA]</scope>
    <source>
        <strain>Berkeley</strain>
        <tissue>Embryo</tissue>
    </source>
</reference>
<reference key="4">
    <citation type="journal article" date="2009" name="Cell">
        <title>GOLPH3 bridges phosphatidylinositol-4- phosphate and actomyosin to stretch and shape the Golgi to promote budding.</title>
        <authorList>
            <person name="Dippold H.C."/>
            <person name="Ng M.M."/>
            <person name="Farber-Katz S.E."/>
            <person name="Lee S.K."/>
            <person name="Kerr M.L."/>
            <person name="Peterman M.C."/>
            <person name="Sim R."/>
            <person name="Wiharto P.A."/>
            <person name="Galbraith K.A."/>
            <person name="Madhavarapu S."/>
            <person name="Fuchs G.J."/>
            <person name="Meerloo T."/>
            <person name="Farquhar M.G."/>
            <person name="Zhou H."/>
            <person name="Field S.J."/>
        </authorList>
    </citation>
    <scope>LIPID-BINDING</scope>
</reference>
<reference key="5">
    <citation type="journal article" date="2013" name="Development">
        <title>The Drosophila GOLPH3 homolog regulates the biosynthesis of heparan sulfate proteoglycans by modulating the retrograde trafficking of exostosins.</title>
        <authorList>
            <person name="Chang W.L."/>
            <person name="Chang C.W."/>
            <person name="Chang Y.Y."/>
            <person name="Sung H.H."/>
            <person name="Lin M.D."/>
            <person name="Chang S.C."/>
            <person name="Chen C.H."/>
            <person name="Huang C.W."/>
            <person name="Tung K.S."/>
            <person name="Chou T.B."/>
        </authorList>
    </citation>
    <scope>FUNCTION IN TRAFFICKING</scope>
    <scope>DISRUPTION PHENOTYPE</scope>
    <scope>INTERACTION WITH BOTV; EXT2; TTV; VTI1</scope>
    <scope>SUBCELLULAR LOCATION</scope>
</reference>
<reference key="6">
    <citation type="journal article" date="2014" name="PLoS Genet.">
        <title>GOLPH3 is essential for contractile ring formation and Rab11 localization to the cleavage site during cytokinesis in Drosophila melanogaster.</title>
        <authorList>
            <person name="Sechi S."/>
            <person name="Colotti G."/>
            <person name="Belloni G."/>
            <person name="Mattei V."/>
            <person name="Frappaolo A."/>
            <person name="Raffa G.D."/>
            <person name="Fuller M.T."/>
            <person name="Giansanti M.G."/>
        </authorList>
    </citation>
    <scope>FUNCTION</scope>
    <scope>INTERACTION WITH VPS35; RAB5; CHC; RAB11; ZIP; PAV AND SEPTIN1</scope>
    <scope>SUBCELLULAR LOCATION</scope>
    <scope>DISRUPTION PHENOTYPE</scope>
    <scope>MUTAGENESIS OF LYS-167; ARG-170 AND GLU-273</scope>
</reference>
<feature type="chain" id="PRO_0000424384" description="Golgi phosphoprotein 3 homolog sauron">
    <location>
        <begin position="1"/>
        <end position="294"/>
    </location>
</feature>
<feature type="region of interest" description="Disordered" evidence="3">
    <location>
        <begin position="1"/>
        <end position="52"/>
    </location>
</feature>
<feature type="region of interest" description="Beta-hairpin required for oligomerization" evidence="1">
    <location>
        <begin position="186"/>
        <end position="197"/>
    </location>
</feature>
<feature type="compositionally biased region" description="Basic and acidic residues" evidence="3">
    <location>
        <begin position="37"/>
        <end position="52"/>
    </location>
</feature>
<feature type="binding site" evidence="1">
    <location>
        <position position="77"/>
    </location>
    <ligand>
        <name>a 1,2-diacyl-sn-glycero-3-phospho-(1D-myo-inositol 4-phosphate)</name>
        <dbReference type="ChEBI" id="CHEBI:58178"/>
    </ligand>
</feature>
<feature type="binding site" evidence="1">
    <location>
        <position position="86"/>
    </location>
    <ligand>
        <name>a 1,2-diacyl-sn-glycero-3-phospho-(1D-myo-inositol 4-phosphate)</name>
        <dbReference type="ChEBI" id="CHEBI:58178"/>
    </ligand>
</feature>
<feature type="binding site" evidence="1">
    <location>
        <position position="167"/>
    </location>
    <ligand>
        <name>a 1,2-diacyl-sn-glycero-3-phospho-(1D-myo-inositol 4-phosphate)</name>
        <dbReference type="ChEBI" id="CHEBI:58178"/>
    </ligand>
</feature>
<feature type="binding site" evidence="1">
    <location>
        <position position="170"/>
    </location>
    <ligand>
        <name>a 1,2-diacyl-sn-glycero-3-phospho-(1D-myo-inositol 4-phosphate)</name>
        <dbReference type="ChEBI" id="CHEBI:58178"/>
    </ligand>
</feature>
<feature type="mutagenesis site" description="Prevents binding to PI(4)P and abolishes sau localization to the Golgi membranes and cleavage furrow; when associated with L-170." evidence="5">
    <original>K</original>
    <variation>A</variation>
    <location>
        <position position="167"/>
    </location>
</feature>
<feature type="mutagenesis site" description="Prevents binding to PI(4)P and abolishes sau localization to the Golgi membranes and cleavage furrow; when associated with A-167." evidence="5">
    <original>R</original>
    <variation>L</variation>
    <location>
        <position position="170"/>
    </location>
</feature>
<feature type="mutagenesis site" description="In Z2217; Impairs cytokinesis. Prevents binding to PI(4)P and PI(5)P." evidence="5">
    <original>E</original>
    <variation>K</variation>
    <location>
        <position position="273"/>
    </location>
</feature>
<name>GOLP3_DROME</name>
<sequence length="294" mass="33511">MNRSDGLVRRSVKPRENGGAEGGLNANTPDDNQDALDNLKDQEDNIDDGDSKETRLTLMEEVLLLGLKDKEGYTSFWNDCISSGLRGCILIELGLRGRVMIEKSGMRRRGLCTRKLILKSDQQTGDVLLDEALKHIKETDPPETVQSWIEYLSGETWNPLKLRYQLKNVRERLAKNLVEKGVLTTEKQNFLLFDMTTHPLSDNVVKCRLVKKIQDSVLSKWVNDPQRMDKRMLALIFLAHASDVIENAFAPLNDDDYEVAMKRVRELLDLDFEAESAKPNANEILWAVFMAFTK</sequence>
<keyword id="KW-0968">Cytoplasmic vesicle</keyword>
<keyword id="KW-0333">Golgi apparatus</keyword>
<keyword id="KW-0446">Lipid-binding</keyword>
<keyword id="KW-0472">Membrane</keyword>
<keyword id="KW-0597">Phosphoprotein</keyword>
<keyword id="KW-0653">Protein transport</keyword>
<keyword id="KW-1185">Reference proteome</keyword>
<keyword id="KW-0813">Transport</keyword>
<proteinExistence type="evidence at protein level"/>